<feature type="chain" id="PRO_0000439761" description="Probable ATP-dependent RNA helicase vasa-like">
    <location>
        <begin position="1"/>
        <end position="703"/>
    </location>
</feature>
<feature type="domain" description="Helicase ATP-binding" evidence="3">
    <location>
        <begin position="292"/>
        <end position="475"/>
    </location>
</feature>
<feature type="domain" description="Helicase C-terminal" evidence="4">
    <location>
        <begin position="506"/>
        <end position="651"/>
    </location>
</feature>
<feature type="zinc finger region" description="CCHC-type 1" evidence="2">
    <location>
        <begin position="77"/>
        <end position="92"/>
    </location>
</feature>
<feature type="zinc finger region" description="CCHC-type 2" evidence="2">
    <location>
        <begin position="166"/>
        <end position="181"/>
    </location>
</feature>
<feature type="zinc finger region" description="CCHC-type 3" evidence="2">
    <location>
        <begin position="189"/>
        <end position="204"/>
    </location>
</feature>
<feature type="region of interest" description="Disordered" evidence="7">
    <location>
        <begin position="1"/>
        <end position="22"/>
    </location>
</feature>
<feature type="region of interest" description="Disordered" evidence="7">
    <location>
        <begin position="35"/>
        <end position="73"/>
    </location>
</feature>
<feature type="region of interest" description="Disordered" evidence="7">
    <location>
        <begin position="88"/>
        <end position="167"/>
    </location>
</feature>
<feature type="region of interest" description="Disordered" evidence="7">
    <location>
        <begin position="676"/>
        <end position="703"/>
    </location>
</feature>
<feature type="short sequence motif" description="Q motif" evidence="5">
    <location>
        <begin position="261"/>
        <end position="289"/>
    </location>
</feature>
<feature type="short sequence motif" description="DEAD box" evidence="3">
    <location>
        <begin position="419"/>
        <end position="422"/>
    </location>
</feature>
<feature type="compositionally biased region" description="Gly residues" evidence="7">
    <location>
        <begin position="61"/>
        <end position="73"/>
    </location>
</feature>
<feature type="compositionally biased region" description="Gly residues" evidence="7">
    <location>
        <begin position="146"/>
        <end position="155"/>
    </location>
</feature>
<feature type="binding site" evidence="6">
    <location>
        <begin position="305"/>
        <end position="312"/>
    </location>
    <ligand>
        <name>ATP</name>
        <dbReference type="ChEBI" id="CHEBI:30616"/>
    </ligand>
</feature>
<dbReference type="EC" id="3.6.4.13" evidence="1"/>
<dbReference type="EMBL" id="DQ095772">
    <property type="protein sequence ID" value="AAY89069.2"/>
    <property type="molecule type" value="mRNA"/>
</dbReference>
<dbReference type="SMR" id="Q4JG17"/>
<dbReference type="OrthoDB" id="196131at2759"/>
<dbReference type="GO" id="GO:0005737">
    <property type="term" value="C:cytoplasm"/>
    <property type="evidence" value="ECO:0007669"/>
    <property type="project" value="UniProtKB-SubCell"/>
</dbReference>
<dbReference type="GO" id="GO:0005730">
    <property type="term" value="C:nucleolus"/>
    <property type="evidence" value="ECO:0007669"/>
    <property type="project" value="UniProtKB-SubCell"/>
</dbReference>
<dbReference type="GO" id="GO:0005524">
    <property type="term" value="F:ATP binding"/>
    <property type="evidence" value="ECO:0007669"/>
    <property type="project" value="UniProtKB-KW"/>
</dbReference>
<dbReference type="GO" id="GO:0016887">
    <property type="term" value="F:ATP hydrolysis activity"/>
    <property type="evidence" value="ECO:0007669"/>
    <property type="project" value="RHEA"/>
</dbReference>
<dbReference type="GO" id="GO:0003723">
    <property type="term" value="F:RNA binding"/>
    <property type="evidence" value="ECO:0007669"/>
    <property type="project" value="UniProtKB-KW"/>
</dbReference>
<dbReference type="GO" id="GO:0003724">
    <property type="term" value="F:RNA helicase activity"/>
    <property type="evidence" value="ECO:0007669"/>
    <property type="project" value="UniProtKB-EC"/>
</dbReference>
<dbReference type="GO" id="GO:0008270">
    <property type="term" value="F:zinc ion binding"/>
    <property type="evidence" value="ECO:0007669"/>
    <property type="project" value="UniProtKB-KW"/>
</dbReference>
<dbReference type="GO" id="GO:0048477">
    <property type="term" value="P:oogenesis"/>
    <property type="evidence" value="ECO:0007669"/>
    <property type="project" value="UniProtKB-KW"/>
</dbReference>
<dbReference type="CDD" id="cd17967">
    <property type="entry name" value="DEADc_DDX3_DDX4"/>
    <property type="match status" value="1"/>
</dbReference>
<dbReference type="CDD" id="cd18787">
    <property type="entry name" value="SF2_C_DEAD"/>
    <property type="match status" value="1"/>
</dbReference>
<dbReference type="FunFam" id="3.40.50.300:FF:000008">
    <property type="entry name" value="ATP-dependent RNA helicase RhlB"/>
    <property type="match status" value="1"/>
</dbReference>
<dbReference type="FunFam" id="3.40.50.300:FF:000397">
    <property type="entry name" value="Probable ATP-dependent RNA helicase DDX4"/>
    <property type="match status" value="1"/>
</dbReference>
<dbReference type="Gene3D" id="3.40.50.300">
    <property type="entry name" value="P-loop containing nucleotide triphosphate hydrolases"/>
    <property type="match status" value="2"/>
</dbReference>
<dbReference type="Gene3D" id="4.10.60.10">
    <property type="entry name" value="Zinc finger, CCHC-type"/>
    <property type="match status" value="3"/>
</dbReference>
<dbReference type="InterPro" id="IPR011545">
    <property type="entry name" value="DEAD/DEAH_box_helicase_dom"/>
</dbReference>
<dbReference type="InterPro" id="IPR044763">
    <property type="entry name" value="Ded1/Dbp1_DEADc"/>
</dbReference>
<dbReference type="InterPro" id="IPR014001">
    <property type="entry name" value="Helicase_ATP-bd"/>
</dbReference>
<dbReference type="InterPro" id="IPR001650">
    <property type="entry name" value="Helicase_C-like"/>
</dbReference>
<dbReference type="InterPro" id="IPR027417">
    <property type="entry name" value="P-loop_NTPase"/>
</dbReference>
<dbReference type="InterPro" id="IPR000629">
    <property type="entry name" value="RNA-helicase_DEAD-box_CS"/>
</dbReference>
<dbReference type="InterPro" id="IPR014014">
    <property type="entry name" value="RNA_helicase_DEAD_Q_motif"/>
</dbReference>
<dbReference type="InterPro" id="IPR001878">
    <property type="entry name" value="Znf_CCHC"/>
</dbReference>
<dbReference type="InterPro" id="IPR036875">
    <property type="entry name" value="Znf_CCHC_sf"/>
</dbReference>
<dbReference type="PANTHER" id="PTHR47958">
    <property type="entry name" value="ATP-DEPENDENT RNA HELICASE DBP3"/>
    <property type="match status" value="1"/>
</dbReference>
<dbReference type="Pfam" id="PF00270">
    <property type="entry name" value="DEAD"/>
    <property type="match status" value="1"/>
</dbReference>
<dbReference type="Pfam" id="PF00271">
    <property type="entry name" value="Helicase_C"/>
    <property type="match status" value="1"/>
</dbReference>
<dbReference type="Pfam" id="PF00098">
    <property type="entry name" value="zf-CCHC"/>
    <property type="match status" value="3"/>
</dbReference>
<dbReference type="SMART" id="SM00487">
    <property type="entry name" value="DEXDc"/>
    <property type="match status" value="1"/>
</dbReference>
<dbReference type="SMART" id="SM00490">
    <property type="entry name" value="HELICc"/>
    <property type="match status" value="1"/>
</dbReference>
<dbReference type="SMART" id="SM00343">
    <property type="entry name" value="ZnF_C2HC"/>
    <property type="match status" value="3"/>
</dbReference>
<dbReference type="SUPFAM" id="SSF52540">
    <property type="entry name" value="P-loop containing nucleoside triphosphate hydrolases"/>
    <property type="match status" value="2"/>
</dbReference>
<dbReference type="SUPFAM" id="SSF57756">
    <property type="entry name" value="Retrovirus zinc finger-like domains"/>
    <property type="match status" value="2"/>
</dbReference>
<dbReference type="PROSITE" id="PS00039">
    <property type="entry name" value="DEAD_ATP_HELICASE"/>
    <property type="match status" value="1"/>
</dbReference>
<dbReference type="PROSITE" id="PS51192">
    <property type="entry name" value="HELICASE_ATP_BIND_1"/>
    <property type="match status" value="1"/>
</dbReference>
<dbReference type="PROSITE" id="PS51194">
    <property type="entry name" value="HELICASE_CTER"/>
    <property type="match status" value="1"/>
</dbReference>
<dbReference type="PROSITE" id="PS51195">
    <property type="entry name" value="Q_MOTIF"/>
    <property type="match status" value="1"/>
</dbReference>
<dbReference type="PROSITE" id="PS50158">
    <property type="entry name" value="ZF_CCHC"/>
    <property type="match status" value="3"/>
</dbReference>
<evidence type="ECO:0000250" key="1">
    <source>
        <dbReference type="UniProtKB" id="P09052"/>
    </source>
</evidence>
<evidence type="ECO:0000255" key="2">
    <source>
        <dbReference type="PROSITE-ProRule" id="PRU00047"/>
    </source>
</evidence>
<evidence type="ECO:0000255" key="3">
    <source>
        <dbReference type="PROSITE-ProRule" id="PRU00541"/>
    </source>
</evidence>
<evidence type="ECO:0000255" key="4">
    <source>
        <dbReference type="PROSITE-ProRule" id="PRU00542"/>
    </source>
</evidence>
<evidence type="ECO:0000255" key="5">
    <source>
        <dbReference type="PROSITE-ProRule" id="PRU00552"/>
    </source>
</evidence>
<evidence type="ECO:0000255" key="6">
    <source>
        <dbReference type="PROSITE-ProRule" id="PRU00560"/>
    </source>
</evidence>
<evidence type="ECO:0000256" key="7">
    <source>
        <dbReference type="SAM" id="MobiDB-lite"/>
    </source>
</evidence>
<evidence type="ECO:0000269" key="8">
    <source>
    </source>
</evidence>
<evidence type="ECO:0000303" key="9">
    <source>
    </source>
</evidence>
<evidence type="ECO:0000305" key="10"/>
<evidence type="ECO:0000312" key="11">
    <source>
        <dbReference type="EMBL" id="AAY89069.2"/>
    </source>
</evidence>
<reference evidence="11" key="1">
    <citation type="journal article" date="2007" name="Mol. Reprod. Dev.">
        <title>Characterization of a vasa-like gene from the pacific white shrimp Litopenaeus vannamei and its expression during oogenesis.</title>
        <authorList>
            <person name="Aflalo E.D."/>
            <person name="Bakhrat A."/>
            <person name="Raviv S."/>
            <person name="Harari D."/>
            <person name="Sagi A."/>
            <person name="Abdu U."/>
        </authorList>
    </citation>
    <scope>NUCLEOTIDE SEQUENCE [MRNA]</scope>
    <scope>SUBCELLULAR LOCATION</scope>
    <scope>TISSUE SPECIFICITY</scope>
    <scope>DEVELOPMENTAL STAGE</scope>
    <scope>PHYLOGENETIC ANALYSIS</scope>
    <source>
        <tissue evidence="9 11">Ovary</tissue>
    </source>
</reference>
<keyword id="KW-0067">ATP-binding</keyword>
<keyword id="KW-0963">Cytoplasm</keyword>
<keyword id="KW-0217">Developmental protein</keyword>
<keyword id="KW-0221">Differentiation</keyword>
<keyword id="KW-0347">Helicase</keyword>
<keyword id="KW-0378">Hydrolase</keyword>
<keyword id="KW-0479">Metal-binding</keyword>
<keyword id="KW-0547">Nucleotide-binding</keyword>
<keyword id="KW-0539">Nucleus</keyword>
<keyword id="KW-0896">Oogenesis</keyword>
<keyword id="KW-0677">Repeat</keyword>
<keyword id="KW-0694">RNA-binding</keyword>
<keyword id="KW-0862">Zinc</keyword>
<keyword id="KW-0863">Zinc-finger</keyword>
<comment type="function">
    <text evidence="1">Involved in translational control mechanisms operating in early stages of oogenesis. Required maternally in many stages of oogenesis, including cystocyte differentiation, oocyte differentiation, and specification of anterior-posterior polarity in the developing cysts. Essential for the formation and/or structural integrity of perinuclear nuage particles during germ cell formation.</text>
</comment>
<comment type="catalytic activity">
    <reaction evidence="1">
        <text>ATP + H2O = ADP + phosphate + H(+)</text>
        <dbReference type="Rhea" id="RHEA:13065"/>
        <dbReference type="ChEBI" id="CHEBI:15377"/>
        <dbReference type="ChEBI" id="CHEBI:15378"/>
        <dbReference type="ChEBI" id="CHEBI:30616"/>
        <dbReference type="ChEBI" id="CHEBI:43474"/>
        <dbReference type="ChEBI" id="CHEBI:456216"/>
        <dbReference type="EC" id="3.6.4.13"/>
    </reaction>
</comment>
<comment type="subcellular location">
    <subcellularLocation>
        <location evidence="8">Cytoplasm</location>
    </subcellularLocation>
    <subcellularLocation>
        <location evidence="8">Nucleus</location>
        <location evidence="8">Nucleolus</location>
    </subcellularLocation>
    <text evidence="1 8">Component of the meiotic nuage, also named P granule, a germ-cell-specific organelle required to repress transposon activity during meiosis. Later seen in the pole plasm at the posterior end of the oocyte as a component of polar granules (By similarity). Localized to the cytoplasm of the oocyte throughout oogenesis (PubMed:16955407).</text>
</comment>
<comment type="tissue specificity">
    <text evidence="8">Expressed in ovaries and testis. Not expressed in somatic tissue of the ovaries including follicle cells, muscle and connective tissue.</text>
</comment>
<comment type="developmental stage">
    <text evidence="8">First detected in oogonia cells and highly expressed in late vitellogenic oocytes during oogenesis.</text>
</comment>
<comment type="similarity">
    <text evidence="10">Belongs to the DEAD box helicase family. DDX4/VASA subfamily.</text>
</comment>
<sequence length="703" mass="75746">MSDDWDETDAAPASDWNIESFGLPTSFGSTKKTCNTGNAFNDGEGGFDEGSQSNFDDPFRSGGGGFGGRGRGGPRACFKCGDEGHMARDCPSASDSRGNRTNNRRQDNWGGGSSSKPANGEPFGFGSAFGDNQESDPFGATESSGFGFGSGSGSRGGRRNDGGRGCFKCGEEGHMSRDCPSGGGRNKGCFKCGQEGHNARDCPNPGEGSEEKKPRAPLYIPADVNEDELFVMGIEAGSNFDAYANVPANVSGAEPIQPAAESFQSMNLRPLLLENIVKAGYGCPTPVQKYTIPNVMNGRDIMACAQTGSGKTAAFLLPMLHYILDNNCPSNAFEEPAQPTGLVICPTRELAIQIMREARKFSHSSVAKCCVAYGGAAGFHQLKTIHSGCHILVATPGRLLDFLEKGKIVFSSLKYLVLDEADRMLDMGFLSSIKTVINHKTMTPTAERITLMFSATFPHEIQELASAFLNNYLFVVVGTVGAANTDVKQEVLCVPKFEKKAKLVEMCEEILISADDEKILVFVEQKRVADFVGTYLCEKKFRATTMHGDRYQAQREQALSEFRTGVHNILVATAVTARGLDIKGIGVVVNYDLPKDIDEYVHRIGRTGRLGNRGLSISFYDDETDACLTKDLVKVLSEANQTIPDWLTQKANASGHAQTYHGSGLFASSDIRSKNGGGRGWEKNQASSFLGGPSESNVDEEWD</sequence>
<name>VASAL_PENVA</name>
<organism evidence="11">
    <name type="scientific">Penaeus vannamei</name>
    <name type="common">Whiteleg shrimp</name>
    <name type="synonym">Litopenaeus vannamei</name>
    <dbReference type="NCBI Taxonomy" id="6689"/>
    <lineage>
        <taxon>Eukaryota</taxon>
        <taxon>Metazoa</taxon>
        <taxon>Ecdysozoa</taxon>
        <taxon>Arthropoda</taxon>
        <taxon>Crustacea</taxon>
        <taxon>Multicrustacea</taxon>
        <taxon>Malacostraca</taxon>
        <taxon>Eumalacostraca</taxon>
        <taxon>Eucarida</taxon>
        <taxon>Decapoda</taxon>
        <taxon>Dendrobranchiata</taxon>
        <taxon>Penaeoidea</taxon>
        <taxon>Penaeidae</taxon>
        <taxon>Penaeus</taxon>
    </lineage>
</organism>
<proteinExistence type="evidence at transcript level"/>
<gene>
    <name evidence="9" type="primary">vasa</name>
</gene>
<protein>
    <recommendedName>
        <fullName evidence="10">Probable ATP-dependent RNA helicase vasa-like</fullName>
        <ecNumber evidence="1">3.6.4.13</ecNumber>
    </recommendedName>
    <alternativeName>
        <fullName evidence="9">Vasa homolog</fullName>
        <shortName evidence="9">Lv-Vasa</shortName>
    </alternativeName>
    <alternativeName>
        <fullName evidence="9 11">Vasa-like protein</fullName>
    </alternativeName>
</protein>
<accession>Q4JG17</accession>